<proteinExistence type="inferred from homology"/>
<dbReference type="EC" id="2.1.1.228" evidence="1"/>
<dbReference type="EMBL" id="CP000919">
    <property type="protein sequence ID" value="ACO19970.1"/>
    <property type="molecule type" value="Genomic_DNA"/>
</dbReference>
<dbReference type="RefSeq" id="WP_000686913.1">
    <property type="nucleotide sequence ID" value="NC_012466.1"/>
</dbReference>
<dbReference type="SMR" id="C1CDC7"/>
<dbReference type="KEGG" id="sjj:SPJ_0716"/>
<dbReference type="HOGENOM" id="CLU_047363_0_1_9"/>
<dbReference type="Proteomes" id="UP000002206">
    <property type="component" value="Chromosome"/>
</dbReference>
<dbReference type="GO" id="GO:0005829">
    <property type="term" value="C:cytosol"/>
    <property type="evidence" value="ECO:0007669"/>
    <property type="project" value="TreeGrafter"/>
</dbReference>
<dbReference type="GO" id="GO:0052906">
    <property type="term" value="F:tRNA (guanine(37)-N1)-methyltransferase activity"/>
    <property type="evidence" value="ECO:0007669"/>
    <property type="project" value="UniProtKB-UniRule"/>
</dbReference>
<dbReference type="GO" id="GO:0002939">
    <property type="term" value="P:tRNA N1-guanine methylation"/>
    <property type="evidence" value="ECO:0007669"/>
    <property type="project" value="TreeGrafter"/>
</dbReference>
<dbReference type="CDD" id="cd18080">
    <property type="entry name" value="TrmD-like"/>
    <property type="match status" value="1"/>
</dbReference>
<dbReference type="FunFam" id="1.10.1270.20:FF:000001">
    <property type="entry name" value="tRNA (guanine-N(1)-)-methyltransferase"/>
    <property type="match status" value="1"/>
</dbReference>
<dbReference type="FunFam" id="3.40.1280.10:FF:000001">
    <property type="entry name" value="tRNA (guanine-N(1)-)-methyltransferase"/>
    <property type="match status" value="1"/>
</dbReference>
<dbReference type="Gene3D" id="3.40.1280.10">
    <property type="match status" value="1"/>
</dbReference>
<dbReference type="Gene3D" id="1.10.1270.20">
    <property type="entry name" value="tRNA(m1g37)methyltransferase, domain 2"/>
    <property type="match status" value="1"/>
</dbReference>
<dbReference type="HAMAP" id="MF_00605">
    <property type="entry name" value="TrmD"/>
    <property type="match status" value="1"/>
</dbReference>
<dbReference type="InterPro" id="IPR029028">
    <property type="entry name" value="Alpha/beta_knot_MTases"/>
</dbReference>
<dbReference type="InterPro" id="IPR023148">
    <property type="entry name" value="tRNA_m1G_MeTrfase_C_sf"/>
</dbReference>
<dbReference type="InterPro" id="IPR002649">
    <property type="entry name" value="tRNA_m1G_MeTrfase_TrmD"/>
</dbReference>
<dbReference type="InterPro" id="IPR029026">
    <property type="entry name" value="tRNA_m1G_MTases_N"/>
</dbReference>
<dbReference type="InterPro" id="IPR016009">
    <property type="entry name" value="tRNA_MeTrfase_TRMD/TRM10"/>
</dbReference>
<dbReference type="NCBIfam" id="NF000648">
    <property type="entry name" value="PRK00026.1"/>
    <property type="match status" value="1"/>
</dbReference>
<dbReference type="NCBIfam" id="TIGR00088">
    <property type="entry name" value="trmD"/>
    <property type="match status" value="1"/>
</dbReference>
<dbReference type="PANTHER" id="PTHR46417">
    <property type="entry name" value="TRNA (GUANINE-N(1)-)-METHYLTRANSFERASE"/>
    <property type="match status" value="1"/>
</dbReference>
<dbReference type="PANTHER" id="PTHR46417:SF1">
    <property type="entry name" value="TRNA (GUANINE-N(1)-)-METHYLTRANSFERASE"/>
    <property type="match status" value="1"/>
</dbReference>
<dbReference type="Pfam" id="PF01746">
    <property type="entry name" value="tRNA_m1G_MT"/>
    <property type="match status" value="1"/>
</dbReference>
<dbReference type="PIRSF" id="PIRSF000386">
    <property type="entry name" value="tRNA_mtase"/>
    <property type="match status" value="1"/>
</dbReference>
<dbReference type="SUPFAM" id="SSF75217">
    <property type="entry name" value="alpha/beta knot"/>
    <property type="match status" value="1"/>
</dbReference>
<protein>
    <recommendedName>
        <fullName evidence="1">tRNA (guanine-N(1)-)-methyltransferase</fullName>
        <ecNumber evidence="1">2.1.1.228</ecNumber>
    </recommendedName>
    <alternativeName>
        <fullName evidence="1">M1G-methyltransferase</fullName>
    </alternativeName>
    <alternativeName>
        <fullName evidence="1">tRNA [GM37] methyltransferase</fullName>
    </alternativeName>
</protein>
<accession>C1CDC7</accession>
<reference key="1">
    <citation type="journal article" date="2010" name="Genome Biol.">
        <title>Structure and dynamics of the pan-genome of Streptococcus pneumoniae and closely related species.</title>
        <authorList>
            <person name="Donati C."/>
            <person name="Hiller N.L."/>
            <person name="Tettelin H."/>
            <person name="Muzzi A."/>
            <person name="Croucher N.J."/>
            <person name="Angiuoli S.V."/>
            <person name="Oggioni M."/>
            <person name="Dunning Hotopp J.C."/>
            <person name="Hu F.Z."/>
            <person name="Riley D.R."/>
            <person name="Covacci A."/>
            <person name="Mitchell T.J."/>
            <person name="Bentley S.D."/>
            <person name="Kilian M."/>
            <person name="Ehrlich G.D."/>
            <person name="Rappuoli R."/>
            <person name="Moxon E.R."/>
            <person name="Masignani V."/>
        </authorList>
    </citation>
    <scope>NUCLEOTIDE SEQUENCE [LARGE SCALE GENOMIC DNA]</scope>
    <source>
        <strain>JJA</strain>
    </source>
</reference>
<organism>
    <name type="scientific">Streptococcus pneumoniae (strain JJA)</name>
    <dbReference type="NCBI Taxonomy" id="488222"/>
    <lineage>
        <taxon>Bacteria</taxon>
        <taxon>Bacillati</taxon>
        <taxon>Bacillota</taxon>
        <taxon>Bacilli</taxon>
        <taxon>Lactobacillales</taxon>
        <taxon>Streptococcaceae</taxon>
        <taxon>Streptococcus</taxon>
    </lineage>
</organism>
<comment type="function">
    <text evidence="1">Specifically methylates guanosine-37 in various tRNAs.</text>
</comment>
<comment type="catalytic activity">
    <reaction evidence="1">
        <text>guanosine(37) in tRNA + S-adenosyl-L-methionine = N(1)-methylguanosine(37) in tRNA + S-adenosyl-L-homocysteine + H(+)</text>
        <dbReference type="Rhea" id="RHEA:36899"/>
        <dbReference type="Rhea" id="RHEA-COMP:10145"/>
        <dbReference type="Rhea" id="RHEA-COMP:10147"/>
        <dbReference type="ChEBI" id="CHEBI:15378"/>
        <dbReference type="ChEBI" id="CHEBI:57856"/>
        <dbReference type="ChEBI" id="CHEBI:59789"/>
        <dbReference type="ChEBI" id="CHEBI:73542"/>
        <dbReference type="ChEBI" id="CHEBI:74269"/>
        <dbReference type="EC" id="2.1.1.228"/>
    </reaction>
</comment>
<comment type="subunit">
    <text evidence="1">Homodimer.</text>
</comment>
<comment type="subcellular location">
    <subcellularLocation>
        <location evidence="1">Cytoplasm</location>
    </subcellularLocation>
</comment>
<comment type="similarity">
    <text evidence="1">Belongs to the RNA methyltransferase TrmD family.</text>
</comment>
<name>TRMD_STRZJ</name>
<sequence length="239" mass="27619">MKIDILTLFPEMFSPLEHSIVGKAREKGLLDIQYHNFRENAEKARHVDDDPYGGGQGMLLRAQPIFDSFDAIEKKNPRVILLDPAGKQFDQAYAEDLAQEEELIFICGHYEGYDERIKTLVTDEISLGDYVLTGGELAAMTMIDATVRLIPEVIGKESSHQDDSFSSGLLEYPQYTRPYDYRGMVVPDVLMSGHHEKIRQWRLYESLKKTYERRPDLLEHYQLTVEEEKMLAEIKENKE</sequence>
<keyword id="KW-0963">Cytoplasm</keyword>
<keyword id="KW-0489">Methyltransferase</keyword>
<keyword id="KW-0949">S-adenosyl-L-methionine</keyword>
<keyword id="KW-0808">Transferase</keyword>
<keyword id="KW-0819">tRNA processing</keyword>
<feature type="chain" id="PRO_1000198588" description="tRNA (guanine-N(1)-)-methyltransferase">
    <location>
        <begin position="1"/>
        <end position="239"/>
    </location>
</feature>
<feature type="binding site" evidence="1">
    <location>
        <position position="108"/>
    </location>
    <ligand>
        <name>S-adenosyl-L-methionine</name>
        <dbReference type="ChEBI" id="CHEBI:59789"/>
    </ligand>
</feature>
<feature type="binding site" evidence="1">
    <location>
        <begin position="127"/>
        <end position="132"/>
    </location>
    <ligand>
        <name>S-adenosyl-L-methionine</name>
        <dbReference type="ChEBI" id="CHEBI:59789"/>
    </ligand>
</feature>
<evidence type="ECO:0000255" key="1">
    <source>
        <dbReference type="HAMAP-Rule" id="MF_00605"/>
    </source>
</evidence>
<gene>
    <name evidence="1" type="primary">trmD</name>
    <name type="ordered locus">SPJ_0716</name>
</gene>